<proteinExistence type="inferred from homology"/>
<evidence type="ECO:0000255" key="1">
    <source>
        <dbReference type="HAMAP-Rule" id="MF_00008"/>
    </source>
</evidence>
<sequence>MKQYLELMQKVLDEGTQKNDRTGTGTLSIFGHQMRFNLREGFPLVTTKRCHLRSIIHELLWFLQGDTNVAYLHENNVTIWDEWADENGNLGPVYGKQWRAWPAPDGRHIDQITTVMNQLKNDPDSRRIIVSAWNVGELDKMALAPCHAFFQFYVADGKLSCQLYQRSCDVFLGLPFNIASYALLVHMMAQQCDLEVGDFVWTGGDTHLYSNHMEQTHLQLSREPRALPKLVIKRKPDSIFDYRFEDFEIEGYDPHPGIKAPVAI</sequence>
<accession>A8AP42</accession>
<gene>
    <name evidence="1" type="primary">thyA</name>
    <name type="ordered locus">CKO_04194</name>
</gene>
<reference key="1">
    <citation type="submission" date="2007-08" db="EMBL/GenBank/DDBJ databases">
        <authorList>
            <consortium name="The Citrobacter koseri Genome Sequencing Project"/>
            <person name="McClelland M."/>
            <person name="Sanderson E.K."/>
            <person name="Porwollik S."/>
            <person name="Spieth J."/>
            <person name="Clifton W.S."/>
            <person name="Latreille P."/>
            <person name="Courtney L."/>
            <person name="Wang C."/>
            <person name="Pepin K."/>
            <person name="Bhonagiri V."/>
            <person name="Nash W."/>
            <person name="Johnson M."/>
            <person name="Thiruvilangam P."/>
            <person name="Wilson R."/>
        </authorList>
    </citation>
    <scope>NUCLEOTIDE SEQUENCE [LARGE SCALE GENOMIC DNA]</scope>
    <source>
        <strain>ATCC BAA-895 / CDC 4225-83 / SGSC4696</strain>
    </source>
</reference>
<name>TYSY_CITK8</name>
<dbReference type="EC" id="2.1.1.45" evidence="1"/>
<dbReference type="EMBL" id="CP000822">
    <property type="protein sequence ID" value="ABV15255.1"/>
    <property type="molecule type" value="Genomic_DNA"/>
</dbReference>
<dbReference type="RefSeq" id="WP_012134943.1">
    <property type="nucleotide sequence ID" value="NC_009792.1"/>
</dbReference>
<dbReference type="SMR" id="A8AP42"/>
<dbReference type="STRING" id="290338.CKO_04194"/>
<dbReference type="GeneID" id="45137814"/>
<dbReference type="KEGG" id="cko:CKO_04194"/>
<dbReference type="HOGENOM" id="CLU_021669_0_0_6"/>
<dbReference type="OrthoDB" id="9774633at2"/>
<dbReference type="UniPathway" id="UPA00575"/>
<dbReference type="Proteomes" id="UP000008148">
    <property type="component" value="Chromosome"/>
</dbReference>
<dbReference type="GO" id="GO:0005829">
    <property type="term" value="C:cytosol"/>
    <property type="evidence" value="ECO:0007669"/>
    <property type="project" value="TreeGrafter"/>
</dbReference>
<dbReference type="GO" id="GO:0004799">
    <property type="term" value="F:thymidylate synthase activity"/>
    <property type="evidence" value="ECO:0007669"/>
    <property type="project" value="UniProtKB-UniRule"/>
</dbReference>
<dbReference type="GO" id="GO:0006231">
    <property type="term" value="P:dTMP biosynthetic process"/>
    <property type="evidence" value="ECO:0007669"/>
    <property type="project" value="UniProtKB-UniRule"/>
</dbReference>
<dbReference type="GO" id="GO:0006235">
    <property type="term" value="P:dTTP biosynthetic process"/>
    <property type="evidence" value="ECO:0007669"/>
    <property type="project" value="UniProtKB-UniRule"/>
</dbReference>
<dbReference type="GO" id="GO:0032259">
    <property type="term" value="P:methylation"/>
    <property type="evidence" value="ECO:0007669"/>
    <property type="project" value="UniProtKB-KW"/>
</dbReference>
<dbReference type="CDD" id="cd00351">
    <property type="entry name" value="TS_Pyrimidine_HMase"/>
    <property type="match status" value="1"/>
</dbReference>
<dbReference type="FunFam" id="3.30.572.10:FF:000001">
    <property type="entry name" value="Thymidylate synthase"/>
    <property type="match status" value="1"/>
</dbReference>
<dbReference type="Gene3D" id="3.30.572.10">
    <property type="entry name" value="Thymidylate synthase/dCMP hydroxymethylase domain"/>
    <property type="match status" value="1"/>
</dbReference>
<dbReference type="HAMAP" id="MF_00008">
    <property type="entry name" value="Thymidy_synth_bact"/>
    <property type="match status" value="1"/>
</dbReference>
<dbReference type="InterPro" id="IPR045097">
    <property type="entry name" value="Thymidate_synth/dCMP_Mease"/>
</dbReference>
<dbReference type="InterPro" id="IPR023451">
    <property type="entry name" value="Thymidate_synth/dCMP_Mease_dom"/>
</dbReference>
<dbReference type="InterPro" id="IPR036926">
    <property type="entry name" value="Thymidate_synth/dCMP_Mease_sf"/>
</dbReference>
<dbReference type="InterPro" id="IPR000398">
    <property type="entry name" value="Thymidylate_synthase"/>
</dbReference>
<dbReference type="InterPro" id="IPR020940">
    <property type="entry name" value="Thymidylate_synthase_AS"/>
</dbReference>
<dbReference type="NCBIfam" id="NF002497">
    <property type="entry name" value="PRK01827.1-3"/>
    <property type="match status" value="1"/>
</dbReference>
<dbReference type="NCBIfam" id="NF002499">
    <property type="entry name" value="PRK01827.1-5"/>
    <property type="match status" value="1"/>
</dbReference>
<dbReference type="NCBIfam" id="TIGR03284">
    <property type="entry name" value="thym_sym"/>
    <property type="match status" value="2"/>
</dbReference>
<dbReference type="PANTHER" id="PTHR11548:SF9">
    <property type="entry name" value="THYMIDYLATE SYNTHASE"/>
    <property type="match status" value="1"/>
</dbReference>
<dbReference type="PANTHER" id="PTHR11548">
    <property type="entry name" value="THYMIDYLATE SYNTHASE 1"/>
    <property type="match status" value="1"/>
</dbReference>
<dbReference type="Pfam" id="PF00303">
    <property type="entry name" value="Thymidylat_synt"/>
    <property type="match status" value="1"/>
</dbReference>
<dbReference type="PRINTS" id="PR00108">
    <property type="entry name" value="THYMDSNTHASE"/>
</dbReference>
<dbReference type="SUPFAM" id="SSF55831">
    <property type="entry name" value="Thymidylate synthase/dCMP hydroxymethylase"/>
    <property type="match status" value="1"/>
</dbReference>
<dbReference type="PROSITE" id="PS00091">
    <property type="entry name" value="THYMIDYLATE_SYNTHASE"/>
    <property type="match status" value="1"/>
</dbReference>
<comment type="function">
    <text evidence="1">Catalyzes the reductive methylation of 2'-deoxyuridine-5'-monophosphate (dUMP) to 2'-deoxythymidine-5'-monophosphate (dTMP) while utilizing 5,10-methylenetetrahydrofolate (mTHF) as the methyl donor and reductant in the reaction, yielding dihydrofolate (DHF) as a by-product. This enzymatic reaction provides an intracellular de novo source of dTMP, an essential precursor for DNA biosynthesis.</text>
</comment>
<comment type="catalytic activity">
    <reaction evidence="1">
        <text>dUMP + (6R)-5,10-methylene-5,6,7,8-tetrahydrofolate = 7,8-dihydrofolate + dTMP</text>
        <dbReference type="Rhea" id="RHEA:12104"/>
        <dbReference type="ChEBI" id="CHEBI:15636"/>
        <dbReference type="ChEBI" id="CHEBI:57451"/>
        <dbReference type="ChEBI" id="CHEBI:63528"/>
        <dbReference type="ChEBI" id="CHEBI:246422"/>
        <dbReference type="EC" id="2.1.1.45"/>
    </reaction>
</comment>
<comment type="pathway">
    <text evidence="1">Pyrimidine metabolism; dTTP biosynthesis.</text>
</comment>
<comment type="subunit">
    <text evidence="1">Homodimer.</text>
</comment>
<comment type="subcellular location">
    <subcellularLocation>
        <location evidence="1">Cytoplasm</location>
    </subcellularLocation>
</comment>
<comment type="similarity">
    <text evidence="1">Belongs to the thymidylate synthase family. Bacterial-type ThyA subfamily.</text>
</comment>
<organism>
    <name type="scientific">Citrobacter koseri (strain ATCC BAA-895 / CDC 4225-83 / SGSC4696)</name>
    <dbReference type="NCBI Taxonomy" id="290338"/>
    <lineage>
        <taxon>Bacteria</taxon>
        <taxon>Pseudomonadati</taxon>
        <taxon>Pseudomonadota</taxon>
        <taxon>Gammaproteobacteria</taxon>
        <taxon>Enterobacterales</taxon>
        <taxon>Enterobacteriaceae</taxon>
        <taxon>Citrobacter</taxon>
    </lineage>
</organism>
<feature type="chain" id="PRO_1000000587" description="Thymidylate synthase">
    <location>
        <begin position="1"/>
        <end position="264"/>
    </location>
</feature>
<feature type="active site" description="Nucleophile" evidence="1">
    <location>
        <position position="146"/>
    </location>
</feature>
<feature type="binding site" description="in other chain" evidence="1">
    <location>
        <position position="21"/>
    </location>
    <ligand>
        <name>dUMP</name>
        <dbReference type="ChEBI" id="CHEBI:246422"/>
        <note>ligand shared between dimeric partners</note>
    </ligand>
</feature>
<feature type="binding site" evidence="1">
    <location>
        <position position="51"/>
    </location>
    <ligand>
        <name>(6R)-5,10-methylene-5,6,7,8-tetrahydrofolate</name>
        <dbReference type="ChEBI" id="CHEBI:15636"/>
    </ligand>
</feature>
<feature type="binding site" evidence="1">
    <location>
        <begin position="126"/>
        <end position="127"/>
    </location>
    <ligand>
        <name>dUMP</name>
        <dbReference type="ChEBI" id="CHEBI:246422"/>
        <note>ligand shared between dimeric partners</note>
    </ligand>
</feature>
<feature type="binding site" description="in other chain" evidence="1">
    <location>
        <begin position="166"/>
        <end position="169"/>
    </location>
    <ligand>
        <name>dUMP</name>
        <dbReference type="ChEBI" id="CHEBI:246422"/>
        <note>ligand shared between dimeric partners</note>
    </ligand>
</feature>
<feature type="binding site" evidence="1">
    <location>
        <position position="169"/>
    </location>
    <ligand>
        <name>(6R)-5,10-methylene-5,6,7,8-tetrahydrofolate</name>
        <dbReference type="ChEBI" id="CHEBI:15636"/>
    </ligand>
</feature>
<feature type="binding site" description="in other chain" evidence="1">
    <location>
        <position position="177"/>
    </location>
    <ligand>
        <name>dUMP</name>
        <dbReference type="ChEBI" id="CHEBI:246422"/>
        <note>ligand shared between dimeric partners</note>
    </ligand>
</feature>
<feature type="binding site" description="in other chain" evidence="1">
    <location>
        <begin position="207"/>
        <end position="209"/>
    </location>
    <ligand>
        <name>dUMP</name>
        <dbReference type="ChEBI" id="CHEBI:246422"/>
        <note>ligand shared between dimeric partners</note>
    </ligand>
</feature>
<feature type="binding site" evidence="1">
    <location>
        <position position="263"/>
    </location>
    <ligand>
        <name>(6R)-5,10-methylene-5,6,7,8-tetrahydrofolate</name>
        <dbReference type="ChEBI" id="CHEBI:15636"/>
    </ligand>
</feature>
<protein>
    <recommendedName>
        <fullName evidence="1">Thymidylate synthase</fullName>
        <shortName evidence="1">TS</shortName>
        <shortName evidence="1">TSase</shortName>
        <ecNumber evidence="1">2.1.1.45</ecNumber>
    </recommendedName>
</protein>
<keyword id="KW-0963">Cytoplasm</keyword>
<keyword id="KW-0489">Methyltransferase</keyword>
<keyword id="KW-0545">Nucleotide biosynthesis</keyword>
<keyword id="KW-1185">Reference proteome</keyword>
<keyword id="KW-0808">Transferase</keyword>